<keyword id="KW-0378">Hydrolase</keyword>
<keyword id="KW-0460">Magnesium</keyword>
<keyword id="KW-0464">Manganese</keyword>
<keyword id="KW-0479">Metal-binding</keyword>
<protein>
    <recommendedName>
        <fullName evidence="1">Uncharacterized Nudix hydrolase NudL</fullName>
        <ecNumber evidence="1">3.6.1.-</ecNumber>
    </recommendedName>
</protein>
<accession>A4TKD0</accession>
<name>NUDL_YERPP</name>
<dbReference type="EC" id="3.6.1.-" evidence="1"/>
<dbReference type="EMBL" id="CP000668">
    <property type="protein sequence ID" value="ABP39742.1"/>
    <property type="molecule type" value="Genomic_DNA"/>
</dbReference>
<dbReference type="RefSeq" id="WP_002211080.1">
    <property type="nucleotide sequence ID" value="NZ_CP009715.1"/>
</dbReference>
<dbReference type="SMR" id="A4TKD0"/>
<dbReference type="KEGG" id="ypp:YPDSF_1351"/>
<dbReference type="GO" id="GO:0010945">
    <property type="term" value="F:coenzyme A diphosphatase activity"/>
    <property type="evidence" value="ECO:0007669"/>
    <property type="project" value="InterPro"/>
</dbReference>
<dbReference type="GO" id="GO:0000287">
    <property type="term" value="F:magnesium ion binding"/>
    <property type="evidence" value="ECO:0007669"/>
    <property type="project" value="UniProtKB-UniRule"/>
</dbReference>
<dbReference type="GO" id="GO:0030145">
    <property type="term" value="F:manganese ion binding"/>
    <property type="evidence" value="ECO:0007669"/>
    <property type="project" value="UniProtKB-UniRule"/>
</dbReference>
<dbReference type="GO" id="GO:0009132">
    <property type="term" value="P:nucleoside diphosphate metabolic process"/>
    <property type="evidence" value="ECO:0007669"/>
    <property type="project" value="InterPro"/>
</dbReference>
<dbReference type="CDD" id="cd03426">
    <property type="entry name" value="NUDIX_CoAse_Nudt7"/>
    <property type="match status" value="1"/>
</dbReference>
<dbReference type="Gene3D" id="3.90.79.10">
    <property type="entry name" value="Nucleoside Triphosphate Pyrophosphohydrolase"/>
    <property type="match status" value="1"/>
</dbReference>
<dbReference type="HAMAP" id="MF_01592">
    <property type="entry name" value="Nudix_NudL"/>
    <property type="match status" value="1"/>
</dbReference>
<dbReference type="InterPro" id="IPR045121">
    <property type="entry name" value="CoAse"/>
</dbReference>
<dbReference type="InterPro" id="IPR015797">
    <property type="entry name" value="NUDIX_hydrolase-like_dom_sf"/>
</dbReference>
<dbReference type="InterPro" id="IPR000086">
    <property type="entry name" value="NUDIX_hydrolase_dom"/>
</dbReference>
<dbReference type="InterPro" id="IPR000059">
    <property type="entry name" value="NUDIX_hydrolase_NudL_CS"/>
</dbReference>
<dbReference type="InterPro" id="IPR023735">
    <property type="entry name" value="Nudix_NudL"/>
</dbReference>
<dbReference type="NCBIfam" id="NF007980">
    <property type="entry name" value="PRK10707.1"/>
    <property type="match status" value="1"/>
</dbReference>
<dbReference type="PANTHER" id="PTHR12992:SF11">
    <property type="entry name" value="MITOCHONDRIAL COENZYME A DIPHOSPHATASE NUDT8"/>
    <property type="match status" value="1"/>
</dbReference>
<dbReference type="PANTHER" id="PTHR12992">
    <property type="entry name" value="NUDIX HYDROLASE"/>
    <property type="match status" value="1"/>
</dbReference>
<dbReference type="Pfam" id="PF00293">
    <property type="entry name" value="NUDIX"/>
    <property type="match status" value="1"/>
</dbReference>
<dbReference type="SUPFAM" id="SSF55811">
    <property type="entry name" value="Nudix"/>
    <property type="match status" value="1"/>
</dbReference>
<dbReference type="PROSITE" id="PS51462">
    <property type="entry name" value="NUDIX"/>
    <property type="match status" value="1"/>
</dbReference>
<dbReference type="PROSITE" id="PS01293">
    <property type="entry name" value="NUDIX_COA"/>
    <property type="match status" value="1"/>
</dbReference>
<proteinExistence type="inferred from homology"/>
<comment type="function">
    <text evidence="1">Probably mediates the hydrolysis of some nucleoside diphosphate derivatives.</text>
</comment>
<comment type="cofactor">
    <cofactor evidence="1">
        <name>Mn(2+)</name>
        <dbReference type="ChEBI" id="CHEBI:29035"/>
    </cofactor>
    <cofactor evidence="1">
        <name>Mg(2+)</name>
        <dbReference type="ChEBI" id="CHEBI:18420"/>
    </cofactor>
</comment>
<comment type="similarity">
    <text evidence="1">Belongs to the Nudix hydrolase family. PCD1 subfamily.</text>
</comment>
<organism>
    <name type="scientific">Yersinia pestis (strain Pestoides F)</name>
    <dbReference type="NCBI Taxonomy" id="386656"/>
    <lineage>
        <taxon>Bacteria</taxon>
        <taxon>Pseudomonadati</taxon>
        <taxon>Pseudomonadota</taxon>
        <taxon>Gammaproteobacteria</taxon>
        <taxon>Enterobacterales</taxon>
        <taxon>Yersiniaceae</taxon>
        <taxon>Yersinia</taxon>
    </lineage>
</organism>
<evidence type="ECO:0000255" key="1">
    <source>
        <dbReference type="HAMAP-Rule" id="MF_01592"/>
    </source>
</evidence>
<sequence>MSELITGQYLSEFINRFQLQLPQPDNVLTHSHYFSATNRRAAVLIPIICRPEPTLLLTRRADHLRKHAGQVAFPGGKADPDDQSLISTALREAEEEVAIPASVVHVLGKLAPLNSSSGYHVTPIVGLVPANIPFYGNDEEVAGLFEIPLHEALSLSRYHSLDIHREGINHRVYLSWYENQFIWGLTATIIRHLAQQVSI</sequence>
<feature type="chain" id="PRO_0000315592" description="Uncharacterized Nudix hydrolase NudL">
    <location>
        <begin position="1"/>
        <end position="199"/>
    </location>
</feature>
<feature type="domain" description="Nudix hydrolase" evidence="1">
    <location>
        <begin position="38"/>
        <end position="169"/>
    </location>
</feature>
<feature type="short sequence motif" description="Nudix box">
    <location>
        <begin position="76"/>
        <end position="98"/>
    </location>
</feature>
<feature type="binding site" evidence="1">
    <location>
        <position position="92"/>
    </location>
    <ligand>
        <name>Mg(2+)</name>
        <dbReference type="ChEBI" id="CHEBI:18420"/>
    </ligand>
</feature>
<feature type="binding site" evidence="1">
    <location>
        <position position="96"/>
    </location>
    <ligand>
        <name>Mg(2+)</name>
        <dbReference type="ChEBI" id="CHEBI:18420"/>
    </ligand>
</feature>
<gene>
    <name evidence="1" type="primary">nudL</name>
    <name type="ordered locus">YPDSF_1351</name>
</gene>
<reference key="1">
    <citation type="submission" date="2007-02" db="EMBL/GenBank/DDBJ databases">
        <title>Complete sequence of chromosome of Yersinia pestis Pestoides F.</title>
        <authorList>
            <consortium name="US DOE Joint Genome Institute"/>
            <person name="Copeland A."/>
            <person name="Lucas S."/>
            <person name="Lapidus A."/>
            <person name="Barry K."/>
            <person name="Detter J.C."/>
            <person name="Glavina del Rio T."/>
            <person name="Hammon N."/>
            <person name="Israni S."/>
            <person name="Dalin E."/>
            <person name="Tice H."/>
            <person name="Pitluck S."/>
            <person name="Di Bartolo G."/>
            <person name="Chain P."/>
            <person name="Malfatti S."/>
            <person name="Shin M."/>
            <person name="Vergez L."/>
            <person name="Schmutz J."/>
            <person name="Larimer F."/>
            <person name="Land M."/>
            <person name="Hauser L."/>
            <person name="Worsham P."/>
            <person name="Chu M."/>
            <person name="Bearden S."/>
            <person name="Garcia E."/>
            <person name="Richardson P."/>
        </authorList>
    </citation>
    <scope>NUCLEOTIDE SEQUENCE [LARGE SCALE GENOMIC DNA]</scope>
    <source>
        <strain>Pestoides F</strain>
    </source>
</reference>